<sequence>MGRWCQTVARGQRPRTSAPSRAGALLLLLLLLRSAGCWGAGEAPGALSTADPADQSVQCVPKATCPSSRPRLLWQTPTTQTLPSTTMETQFPVSEGKVDPYRSCGFSYEQDPTLRDPEAVARRWPWMVSVRANGTHICAGTIIASQWVLTVAHCLIWRDVIYSVRVGSPWIDQMTQTASDVPVLQVIMHSRYRAQRFWSWVGQANDIGLLKLKQELKYSNYVRPICLPGTDYVLKDHSRCTVTGWGLSKADGMWPQFRTIQEKEVIILNNKECDNFYHNFTKIPTLVQIIKSQMMCAEDTHREKFCYELTGEPLVCSMEGTWYLVGLVSWGAGCQKSEAPPIYLQVSSYQHWIWDCLNGQALALPAPSRTLLLALPLPLSLLAAL</sequence>
<evidence type="ECO:0000255" key="1"/>
<evidence type="ECO:0000255" key="2">
    <source>
        <dbReference type="PROSITE-ProRule" id="PRU00274"/>
    </source>
</evidence>
<evidence type="ECO:0000269" key="3">
    <source>
    </source>
</evidence>
<evidence type="ECO:0000305" key="4"/>
<evidence type="ECO:0000305" key="5">
    <source>
    </source>
</evidence>
<protein>
    <recommendedName>
        <fullName>Probable threonine protease PRSS50</fullName>
        <ecNumber evidence="3">3.4.25.-</ecNumber>
    </recommendedName>
    <alternativeName>
        <fullName>Cancer/testis antigen 20</fullName>
    </alternativeName>
    <alternativeName>
        <fullName>Serine protease 50</fullName>
    </alternativeName>
    <alternativeName>
        <fullName>Testis-specific protease-like protein 50</fullName>
    </alternativeName>
</protein>
<organism>
    <name type="scientific">Homo sapiens</name>
    <name type="common">Human</name>
    <dbReference type="NCBI Taxonomy" id="9606"/>
    <lineage>
        <taxon>Eukaryota</taxon>
        <taxon>Metazoa</taxon>
        <taxon>Chordata</taxon>
        <taxon>Craniata</taxon>
        <taxon>Vertebrata</taxon>
        <taxon>Euteleostomi</taxon>
        <taxon>Mammalia</taxon>
        <taxon>Eutheria</taxon>
        <taxon>Euarchontoglires</taxon>
        <taxon>Primates</taxon>
        <taxon>Haplorrhini</taxon>
        <taxon>Catarrhini</taxon>
        <taxon>Hominidae</taxon>
        <taxon>Homo</taxon>
    </lineage>
</organism>
<proteinExistence type="evidence at protein level"/>
<name>TSP50_HUMAN</name>
<gene>
    <name type="primary">PRSS50</name>
    <name type="synonym">CT20</name>
    <name type="synonym">TSP50</name>
</gene>
<feature type="signal peptide" evidence="1">
    <location>
        <begin position="1"/>
        <end position="39"/>
    </location>
</feature>
<feature type="chain" id="PRO_0000028492" description="Probable threonine protease PRSS50">
    <location>
        <begin position="40"/>
        <end position="385"/>
    </location>
</feature>
<feature type="domain" description="Peptidase S1" evidence="2">
    <location>
        <begin position="93"/>
        <end position="358"/>
    </location>
</feature>
<feature type="active site" description="Charge relay system" evidence="2">
    <location>
        <position position="153"/>
    </location>
</feature>
<feature type="active site" description="Charge relay system" evidence="2">
    <location>
        <position position="206"/>
    </location>
</feature>
<feature type="active site" description="Charge relay system" evidence="2">
    <location>
        <position position="310"/>
    </location>
</feature>
<feature type="glycosylation site" description="N-linked (GlcNAc...) asparagine" evidence="1">
    <location>
        <position position="133"/>
    </location>
</feature>
<feature type="glycosylation site" description="N-linked (GlcNAc...) asparagine" evidence="1">
    <location>
        <position position="279"/>
    </location>
</feature>
<feature type="disulfide bond" evidence="2">
    <location>
        <begin position="138"/>
        <end position="154"/>
    </location>
</feature>
<feature type="disulfide bond" evidence="2">
    <location>
        <begin position="240"/>
        <end position="316"/>
    </location>
</feature>
<feature type="disulfide bond" evidence="2">
    <location>
        <begin position="273"/>
        <end position="296"/>
    </location>
</feature>
<feature type="disulfide bond" evidence="2">
    <location>
        <begin position="306"/>
        <end position="334"/>
    </location>
</feature>
<feature type="sequence variant" id="VAR_051859" description="In dbSNP:rs34788938.">
    <original>Q</original>
    <variation>P</variation>
    <location>
        <position position="75"/>
    </location>
</feature>
<feature type="sequence variant" id="VAR_051860" description="In dbSNP:rs35866901.">
    <original>V</original>
    <variation>I</variation>
    <location>
        <position position="98"/>
    </location>
</feature>
<feature type="mutagenesis site" description="Loss of catalytic activity." evidence="3">
    <original>T</original>
    <variation>A</variation>
    <location>
        <position position="310"/>
    </location>
</feature>
<dbReference type="EC" id="3.4.25.-" evidence="3"/>
<dbReference type="EMBL" id="AF100707">
    <property type="protein sequence ID" value="AAF22500.1"/>
    <property type="molecule type" value="mRNA"/>
</dbReference>
<dbReference type="EMBL" id="BC033016">
    <property type="protein sequence ID" value="AAH33016.1"/>
    <property type="molecule type" value="mRNA"/>
</dbReference>
<dbReference type="EMBL" id="BC037775">
    <property type="protein sequence ID" value="AAH37775.1"/>
    <property type="molecule type" value="mRNA"/>
</dbReference>
<dbReference type="CCDS" id="CCDS2745.1"/>
<dbReference type="RefSeq" id="NP_037402.1">
    <property type="nucleotide sequence ID" value="NM_013270.5"/>
</dbReference>
<dbReference type="SMR" id="Q9UI38"/>
<dbReference type="BioGRID" id="118887">
    <property type="interactions" value="50"/>
</dbReference>
<dbReference type="FunCoup" id="Q9UI38">
    <property type="interactions" value="133"/>
</dbReference>
<dbReference type="IntAct" id="Q9UI38">
    <property type="interactions" value="40"/>
</dbReference>
<dbReference type="MINT" id="Q9UI38"/>
<dbReference type="STRING" id="9606.ENSP00000326598"/>
<dbReference type="MEROPS" id="S01.993"/>
<dbReference type="GlyCosmos" id="Q9UI38">
    <property type="glycosylation" value="2 sites, No reported glycans"/>
</dbReference>
<dbReference type="GlyGen" id="Q9UI38">
    <property type="glycosylation" value="2 sites"/>
</dbReference>
<dbReference type="iPTMnet" id="Q9UI38"/>
<dbReference type="PhosphoSitePlus" id="Q9UI38"/>
<dbReference type="BioMuta" id="PRSS50"/>
<dbReference type="DMDM" id="37089988"/>
<dbReference type="jPOST" id="Q9UI38"/>
<dbReference type="MassIVE" id="Q9UI38"/>
<dbReference type="PaxDb" id="9606-ENSP00000418875"/>
<dbReference type="PeptideAtlas" id="Q9UI38"/>
<dbReference type="ProteomicsDB" id="84468"/>
<dbReference type="Antibodypedia" id="78661">
    <property type="antibodies" value="64 antibodies from 11 providers"/>
</dbReference>
<dbReference type="DNASU" id="29122"/>
<dbReference type="Ensembl" id="ENST00000315170.13">
    <property type="protein sequence ID" value="ENSP00000326598.7"/>
    <property type="gene ID" value="ENSG00000283706.2"/>
</dbReference>
<dbReference type="GeneID" id="29122"/>
<dbReference type="KEGG" id="hsa:29122"/>
<dbReference type="MANE-Select" id="ENST00000315170.13">
    <property type="protein sequence ID" value="ENSP00000326598.7"/>
    <property type="RefSeq nucleotide sequence ID" value="NM_013270.5"/>
    <property type="RefSeq protein sequence ID" value="NP_037402.1"/>
</dbReference>
<dbReference type="UCSC" id="uc003cqe.2">
    <property type="organism name" value="human"/>
</dbReference>
<dbReference type="AGR" id="HGNC:17910"/>
<dbReference type="CTD" id="29122"/>
<dbReference type="DisGeNET" id="29122"/>
<dbReference type="GeneCards" id="PRSS50"/>
<dbReference type="HGNC" id="HGNC:17910">
    <property type="gene designation" value="PRSS50"/>
</dbReference>
<dbReference type="HPA" id="ENSG00000283706">
    <property type="expression patterns" value="Group enriched (pituitary gland, testis, thyroid gland)"/>
</dbReference>
<dbReference type="MIM" id="607950">
    <property type="type" value="gene"/>
</dbReference>
<dbReference type="neXtProt" id="NX_Q9UI38"/>
<dbReference type="OpenTargets" id="ENSG00000206549"/>
<dbReference type="PharmGKB" id="PA165698443"/>
<dbReference type="VEuPathDB" id="HostDB:ENSG00000206549"/>
<dbReference type="eggNOG" id="KOG3627">
    <property type="taxonomic scope" value="Eukaryota"/>
</dbReference>
<dbReference type="GeneTree" id="ENSGT00940000162593"/>
<dbReference type="HOGENOM" id="CLU_006842_0_4_1"/>
<dbReference type="InParanoid" id="Q9UI38"/>
<dbReference type="OMA" id="GMVSWGP"/>
<dbReference type="OrthoDB" id="9448935at2759"/>
<dbReference type="PAN-GO" id="Q9UI38">
    <property type="GO annotations" value="2 GO annotations based on evolutionary models"/>
</dbReference>
<dbReference type="PhylomeDB" id="Q9UI38"/>
<dbReference type="TreeFam" id="TF351676"/>
<dbReference type="PathwayCommons" id="Q9UI38"/>
<dbReference type="SignaLink" id="Q9UI38"/>
<dbReference type="BioGRID-ORCS" id="29122">
    <property type="hits" value="42 hits in 1137 CRISPR screens"/>
</dbReference>
<dbReference type="GenomeRNAi" id="29122"/>
<dbReference type="Pharos" id="Q9UI38">
    <property type="development level" value="Tbio"/>
</dbReference>
<dbReference type="PRO" id="PR:Q9UI38"/>
<dbReference type="Proteomes" id="UP000005640">
    <property type="component" value="Chromosome 3"/>
</dbReference>
<dbReference type="RNAct" id="Q9UI38">
    <property type="molecule type" value="protein"/>
</dbReference>
<dbReference type="Bgee" id="ENSG00000283706">
    <property type="expression patterns" value="Expressed in right testis and 90 other cell types or tissues"/>
</dbReference>
<dbReference type="ExpressionAtlas" id="Q9UI38">
    <property type="expression patterns" value="baseline"/>
</dbReference>
<dbReference type="GO" id="GO:0005737">
    <property type="term" value="C:cytoplasm"/>
    <property type="evidence" value="ECO:0000314"/>
    <property type="project" value="UniProtKB"/>
</dbReference>
<dbReference type="GO" id="GO:0005783">
    <property type="term" value="C:endoplasmic reticulum"/>
    <property type="evidence" value="ECO:0000314"/>
    <property type="project" value="UniProtKB"/>
</dbReference>
<dbReference type="GO" id="GO:0004252">
    <property type="term" value="F:serine-type endopeptidase activity"/>
    <property type="evidence" value="ECO:0007669"/>
    <property type="project" value="InterPro"/>
</dbReference>
<dbReference type="GO" id="GO:0004298">
    <property type="term" value="F:threonine-type endopeptidase activity"/>
    <property type="evidence" value="ECO:0000315"/>
    <property type="project" value="UniProtKB"/>
</dbReference>
<dbReference type="GO" id="GO:0006508">
    <property type="term" value="P:proteolysis"/>
    <property type="evidence" value="ECO:0000314"/>
    <property type="project" value="UniProtKB"/>
</dbReference>
<dbReference type="CDD" id="cd00190">
    <property type="entry name" value="Tryp_SPc"/>
    <property type="match status" value="1"/>
</dbReference>
<dbReference type="FunFam" id="2.40.10.10:FF:000106">
    <property type="entry name" value="Probable threonine protease PRSS50"/>
    <property type="match status" value="1"/>
</dbReference>
<dbReference type="FunFam" id="2.40.10.10:FF:000127">
    <property type="entry name" value="Probable threonine protease PRSS50"/>
    <property type="match status" value="1"/>
</dbReference>
<dbReference type="Gene3D" id="2.40.10.10">
    <property type="entry name" value="Trypsin-like serine proteases"/>
    <property type="match status" value="2"/>
</dbReference>
<dbReference type="InterPro" id="IPR009003">
    <property type="entry name" value="Peptidase_S1_PA"/>
</dbReference>
<dbReference type="InterPro" id="IPR043504">
    <property type="entry name" value="Peptidase_S1_PA_chymotrypsin"/>
</dbReference>
<dbReference type="InterPro" id="IPR001314">
    <property type="entry name" value="Peptidase_S1A"/>
</dbReference>
<dbReference type="InterPro" id="IPR001254">
    <property type="entry name" value="Trypsin_dom"/>
</dbReference>
<dbReference type="PANTHER" id="PTHR24253:SF35">
    <property type="entry name" value="THREONINE PROTEASE PRSS50-RELATED"/>
    <property type="match status" value="1"/>
</dbReference>
<dbReference type="PANTHER" id="PTHR24253">
    <property type="entry name" value="TRANSMEMBRANE PROTEASE SERINE"/>
    <property type="match status" value="1"/>
</dbReference>
<dbReference type="Pfam" id="PF00089">
    <property type="entry name" value="Trypsin"/>
    <property type="match status" value="1"/>
</dbReference>
<dbReference type="PRINTS" id="PR00722">
    <property type="entry name" value="CHYMOTRYPSIN"/>
</dbReference>
<dbReference type="SMART" id="SM00020">
    <property type="entry name" value="Tryp_SPc"/>
    <property type="match status" value="1"/>
</dbReference>
<dbReference type="SUPFAM" id="SSF50494">
    <property type="entry name" value="Trypsin-like serine proteases"/>
    <property type="match status" value="1"/>
</dbReference>
<dbReference type="PROSITE" id="PS50240">
    <property type="entry name" value="TRYPSIN_DOM"/>
    <property type="match status" value="1"/>
</dbReference>
<accession>Q9UI38</accession>
<reference key="1">
    <citation type="journal article" date="1999" name="Cancer Res.">
        <title>Isolation of a novel gene, TSP50, by a hypomethylated DNA fragment in human breast cancer.</title>
        <authorList>
            <person name="Yuan L."/>
            <person name="Shan J."/>
            <person name="De Risi D."/>
            <person name="Broome J."/>
            <person name="Lovecchio J."/>
            <person name="Gal D."/>
            <person name="Vinciguerra V."/>
            <person name="Xu H.-P."/>
        </authorList>
    </citation>
    <scope>NUCLEOTIDE SEQUENCE [MRNA]</scope>
    <source>
        <tissue>Mammary cancer</tissue>
    </source>
</reference>
<reference key="2">
    <citation type="journal article" date="2004" name="Genome Res.">
        <title>The status, quality, and expansion of the NIH full-length cDNA project: the Mammalian Gene Collection (MGC).</title>
        <authorList>
            <consortium name="The MGC Project Team"/>
        </authorList>
    </citation>
    <scope>NUCLEOTIDE SEQUENCE [LARGE SCALE MRNA]</scope>
    <source>
        <tissue>Testis</tissue>
    </source>
</reference>
<reference key="3">
    <citation type="journal article" date="2007" name="Cancer Res.">
        <title>TSP50 encodes a testis-specific protease and is negatively regulated by p53.</title>
        <authorList>
            <person name="Xu H."/>
            <person name="Shan J."/>
            <person name="Jurukovski V."/>
            <person name="Yuan L."/>
            <person name="Li J."/>
            <person name="Tian K."/>
        </authorList>
    </citation>
    <scope>FUNCTION</scope>
    <scope>CATALYTIC ACTIVITY</scope>
    <scope>SUBCELLULAR LOCATION</scope>
    <scope>MUTAGENESIS OF THR-310</scope>
</reference>
<comment type="function">
    <text evidence="3">May be involved in proteolysis through its threonine endopeptidase activity.</text>
</comment>
<comment type="subcellular location">
    <subcellularLocation>
        <location evidence="5">Endoplasmic reticulum</location>
    </subcellularLocation>
    <text>May also localize to cytoplasmic membranes.</text>
</comment>
<comment type="tissue specificity">
    <text>Testis specific. Differentially expressed in some breast cancer tissues.</text>
</comment>
<comment type="miscellaneous">
    <text>DNA hypomethylation is accompanied by the expression of the gene in the testis.</text>
</comment>
<comment type="similarity">
    <text evidence="2">Belongs to the peptidase S1 family.</text>
</comment>
<comment type="caution">
    <text evidence="4">Although related to peptidase S1 family, lacks the conserved active Ser residue in position 310 which is replaced by a Thr.</text>
</comment>
<keyword id="KW-1015">Disulfide bond</keyword>
<keyword id="KW-0256">Endoplasmic reticulum</keyword>
<keyword id="KW-0325">Glycoprotein</keyword>
<keyword id="KW-0378">Hydrolase</keyword>
<keyword id="KW-0645">Protease</keyword>
<keyword id="KW-1267">Proteomics identification</keyword>
<keyword id="KW-1185">Reference proteome</keyword>
<keyword id="KW-0732">Signal</keyword>
<keyword id="KW-0888">Threonine protease</keyword>